<name>FYV6_CANGA</name>
<keyword id="KW-0158">Chromosome</keyword>
<keyword id="KW-0539">Nucleus</keyword>
<keyword id="KW-1185">Reference proteome</keyword>
<keyword id="KW-0779">Telomere</keyword>
<accession>Q6FMA5</accession>
<proteinExistence type="inferred from homology"/>
<comment type="function">
    <text evidence="1">Involved in telomere length regulation and promotes fully efficient non-homologous end-joining (NHEJ) by a mechanism activated in postdiauxic/stationary phase.</text>
</comment>
<comment type="subcellular location">
    <subcellularLocation>
        <location evidence="1">Nucleus</location>
    </subcellularLocation>
    <subcellularLocation>
        <location evidence="1">Chromosome</location>
        <location evidence="1">Telomere</location>
    </subcellularLocation>
</comment>
<comment type="similarity">
    <text evidence="3">Belongs to the FYV6 family.</text>
</comment>
<dbReference type="EMBL" id="CR380957">
    <property type="protein sequence ID" value="CAG61602.1"/>
    <property type="molecule type" value="Genomic_DNA"/>
</dbReference>
<dbReference type="RefSeq" id="XP_448639.1">
    <property type="nucleotide sequence ID" value="XM_448639.1"/>
</dbReference>
<dbReference type="SMR" id="Q6FMA5"/>
<dbReference type="FunCoup" id="Q6FMA5">
    <property type="interactions" value="56"/>
</dbReference>
<dbReference type="STRING" id="284593.Q6FMA5"/>
<dbReference type="EnsemblFungi" id="CAGL0K09680g-T">
    <property type="protein sequence ID" value="CAGL0K09680g-T-p1"/>
    <property type="gene ID" value="CAGL0K09680g"/>
</dbReference>
<dbReference type="KEGG" id="cgr:2890242"/>
<dbReference type="CGD" id="CAL0134691">
    <property type="gene designation" value="CAGL0K09680g"/>
</dbReference>
<dbReference type="VEuPathDB" id="FungiDB:CAGL0K09680g"/>
<dbReference type="HOGENOM" id="CLU_128329_0_0_1"/>
<dbReference type="InParanoid" id="Q6FMA5"/>
<dbReference type="OMA" id="HEVPENR"/>
<dbReference type="Proteomes" id="UP000002428">
    <property type="component" value="Chromosome K"/>
</dbReference>
<dbReference type="GO" id="GO:0000781">
    <property type="term" value="C:chromosome, telomeric region"/>
    <property type="evidence" value="ECO:0007669"/>
    <property type="project" value="UniProtKB-SubCell"/>
</dbReference>
<dbReference type="GO" id="GO:0005634">
    <property type="term" value="C:nucleus"/>
    <property type="evidence" value="ECO:0007669"/>
    <property type="project" value="UniProtKB-SubCell"/>
</dbReference>
<dbReference type="InterPro" id="IPR019331">
    <property type="entry name" value="FAM192A/Fyv6_N"/>
</dbReference>
<dbReference type="Pfam" id="PF10187">
    <property type="entry name" value="FAM192A_Fyv6_N"/>
    <property type="match status" value="1"/>
</dbReference>
<evidence type="ECO:0000250" key="1"/>
<evidence type="ECO:0000256" key="2">
    <source>
        <dbReference type="SAM" id="MobiDB-lite"/>
    </source>
</evidence>
<evidence type="ECO:0000305" key="3"/>
<protein>
    <recommendedName>
        <fullName>Protein FYV6</fullName>
    </recommendedName>
</protein>
<sequence>MSEEKKLQFVTEGQADVEKQSEREEAIQGAIETERKKRVRKTLRDQLRANAIKKQKKSNRESAEVKKLNQLSKEETRYFKELEKNREQEIQRLTQFHKDKDYEYEKKRQQLLSRSPDKQSGKPDTLSSNQNNGSTERVILKVKNKNRPRLVVKK</sequence>
<organism>
    <name type="scientific">Candida glabrata (strain ATCC 2001 / BCRC 20586 / JCM 3761 / NBRC 0622 / NRRL Y-65 / CBS 138)</name>
    <name type="common">Yeast</name>
    <name type="synonym">Nakaseomyces glabratus</name>
    <dbReference type="NCBI Taxonomy" id="284593"/>
    <lineage>
        <taxon>Eukaryota</taxon>
        <taxon>Fungi</taxon>
        <taxon>Dikarya</taxon>
        <taxon>Ascomycota</taxon>
        <taxon>Saccharomycotina</taxon>
        <taxon>Saccharomycetes</taxon>
        <taxon>Saccharomycetales</taxon>
        <taxon>Saccharomycetaceae</taxon>
        <taxon>Nakaseomyces</taxon>
    </lineage>
</organism>
<reference key="1">
    <citation type="journal article" date="2004" name="Nature">
        <title>Genome evolution in yeasts.</title>
        <authorList>
            <person name="Dujon B."/>
            <person name="Sherman D."/>
            <person name="Fischer G."/>
            <person name="Durrens P."/>
            <person name="Casaregola S."/>
            <person name="Lafontaine I."/>
            <person name="de Montigny J."/>
            <person name="Marck C."/>
            <person name="Neuveglise C."/>
            <person name="Talla E."/>
            <person name="Goffard N."/>
            <person name="Frangeul L."/>
            <person name="Aigle M."/>
            <person name="Anthouard V."/>
            <person name="Babour A."/>
            <person name="Barbe V."/>
            <person name="Barnay S."/>
            <person name="Blanchin S."/>
            <person name="Beckerich J.-M."/>
            <person name="Beyne E."/>
            <person name="Bleykasten C."/>
            <person name="Boisrame A."/>
            <person name="Boyer J."/>
            <person name="Cattolico L."/>
            <person name="Confanioleri F."/>
            <person name="de Daruvar A."/>
            <person name="Despons L."/>
            <person name="Fabre E."/>
            <person name="Fairhead C."/>
            <person name="Ferry-Dumazet H."/>
            <person name="Groppi A."/>
            <person name="Hantraye F."/>
            <person name="Hennequin C."/>
            <person name="Jauniaux N."/>
            <person name="Joyet P."/>
            <person name="Kachouri R."/>
            <person name="Kerrest A."/>
            <person name="Koszul R."/>
            <person name="Lemaire M."/>
            <person name="Lesur I."/>
            <person name="Ma L."/>
            <person name="Muller H."/>
            <person name="Nicaud J.-M."/>
            <person name="Nikolski M."/>
            <person name="Oztas S."/>
            <person name="Ozier-Kalogeropoulos O."/>
            <person name="Pellenz S."/>
            <person name="Potier S."/>
            <person name="Richard G.-F."/>
            <person name="Straub M.-L."/>
            <person name="Suleau A."/>
            <person name="Swennen D."/>
            <person name="Tekaia F."/>
            <person name="Wesolowski-Louvel M."/>
            <person name="Westhof E."/>
            <person name="Wirth B."/>
            <person name="Zeniou-Meyer M."/>
            <person name="Zivanovic Y."/>
            <person name="Bolotin-Fukuhara M."/>
            <person name="Thierry A."/>
            <person name="Bouchier C."/>
            <person name="Caudron B."/>
            <person name="Scarpelli C."/>
            <person name="Gaillardin C."/>
            <person name="Weissenbach J."/>
            <person name="Wincker P."/>
            <person name="Souciet J.-L."/>
        </authorList>
    </citation>
    <scope>NUCLEOTIDE SEQUENCE [LARGE SCALE GENOMIC DNA]</scope>
    <source>
        <strain>ATCC 2001 / BCRC 20586 / JCM 3761 / NBRC 0622 / NRRL Y-65 / CBS 138</strain>
    </source>
</reference>
<gene>
    <name type="primary">FYV6</name>
    <name type="ordered locus">CAGL0K09680g</name>
</gene>
<feature type="chain" id="PRO_0000292477" description="Protein FYV6">
    <location>
        <begin position="1"/>
        <end position="154"/>
    </location>
</feature>
<feature type="region of interest" description="Disordered" evidence="2">
    <location>
        <begin position="1"/>
        <end position="30"/>
    </location>
</feature>
<feature type="region of interest" description="Disordered" evidence="2">
    <location>
        <begin position="48"/>
        <end position="68"/>
    </location>
</feature>
<feature type="region of interest" description="Disordered" evidence="2">
    <location>
        <begin position="98"/>
        <end position="154"/>
    </location>
</feature>
<feature type="compositionally biased region" description="Basic and acidic residues" evidence="2">
    <location>
        <begin position="16"/>
        <end position="26"/>
    </location>
</feature>
<feature type="compositionally biased region" description="Basic and acidic residues" evidence="2">
    <location>
        <begin position="58"/>
        <end position="68"/>
    </location>
</feature>
<feature type="compositionally biased region" description="Basic and acidic residues" evidence="2">
    <location>
        <begin position="98"/>
        <end position="108"/>
    </location>
</feature>
<feature type="compositionally biased region" description="Polar residues" evidence="2">
    <location>
        <begin position="125"/>
        <end position="135"/>
    </location>
</feature>
<feature type="compositionally biased region" description="Basic residues" evidence="2">
    <location>
        <begin position="140"/>
        <end position="154"/>
    </location>
</feature>